<evidence type="ECO:0000255" key="1">
    <source>
        <dbReference type="HAMAP-Rule" id="MF_04004"/>
    </source>
</evidence>
<comment type="function">
    <text evidence="1">Plays a role in viral genome replication by driving entry of quiescent cells into the cell cycle. Stimulation of progression from G1 to S phase allows the virus to efficiently use the cellular DNA replicating machinery to achieve viral genome replication. E7 protein has both transforming and trans-activating activities. Induces the disassembly of the E2F1 transcription factor from RB1, with subsequent transcriptional activation of E2F1-regulated S-phase genes. Interferes with host histone deacetylation mediated by HDAC1 and HDAC2, leading to transcription activation. Also plays a role in the inhibition of both antiviral and antiproliferative functions of host interferon alpha. Interaction with host TMEM173/STING impairs the ability of TMEM173/STING to sense cytosolic DNA and promote the production of type I interferon (IFN-alpha and IFN-beta).</text>
</comment>
<comment type="subunit">
    <text evidence="1">Homodimer. Homooligomer. Interacts with host RB1; this interaction induces dissociation of RB1-E2F1 complex thereby disrupting RB1 activity. Interacts with host EP300; this interaction represses EP300 transcriptional activity. Interacts with protein E2; this interaction inhibits E7 oncogenic activity. Interacts with host TMEM173/STING; this interaction impairs the ability of TMEM173/STING to sense cytosolic DNA and promote the production of type I interferon (IFN-alpha and IFN-beta).</text>
</comment>
<comment type="subcellular location">
    <subcellularLocation>
        <location evidence="1">Host cytoplasm</location>
    </subcellularLocation>
    <subcellularLocation>
        <location evidence="1">Host nucleus</location>
    </subcellularLocation>
    <text evidence="1">Predominantly found in the host nucleus.</text>
</comment>
<comment type="domain">
    <text evidence="1">The E7 terminal domain is an intrinsically disordered domain, whose flexibility and conformational transitions confer target adaptability to the oncoprotein. It allows adaptation to a variety of protein targets and exposes the PEST degradation sequence that regulates its turnover in the cell.</text>
</comment>
<comment type="PTM">
    <text evidence="1">Highly phosphorylated.</text>
</comment>
<comment type="similarity">
    <text evidence="1">Belongs to the papillomaviridae E7 protein family.</text>
</comment>
<dbReference type="EMBL" id="U31784">
    <property type="protein sequence ID" value="AAA79430.1"/>
    <property type="molecule type" value="Genomic_DNA"/>
</dbReference>
<dbReference type="SMR" id="P50784"/>
<dbReference type="Proteomes" id="UP000009115">
    <property type="component" value="Segment"/>
</dbReference>
<dbReference type="GO" id="GO:0030430">
    <property type="term" value="C:host cell cytoplasm"/>
    <property type="evidence" value="ECO:0007669"/>
    <property type="project" value="UniProtKB-SubCell"/>
</dbReference>
<dbReference type="GO" id="GO:0042025">
    <property type="term" value="C:host cell nucleus"/>
    <property type="evidence" value="ECO:0007669"/>
    <property type="project" value="UniProtKB-SubCell"/>
</dbReference>
<dbReference type="GO" id="GO:0003677">
    <property type="term" value="F:DNA binding"/>
    <property type="evidence" value="ECO:0007669"/>
    <property type="project" value="UniProtKB-UniRule"/>
</dbReference>
<dbReference type="GO" id="GO:0003700">
    <property type="term" value="F:DNA-binding transcription factor activity"/>
    <property type="evidence" value="ECO:0007669"/>
    <property type="project" value="UniProtKB-UniRule"/>
</dbReference>
<dbReference type="GO" id="GO:0019904">
    <property type="term" value="F:protein domain specific binding"/>
    <property type="evidence" value="ECO:0007669"/>
    <property type="project" value="UniProtKB-UniRule"/>
</dbReference>
<dbReference type="GO" id="GO:0008270">
    <property type="term" value="F:zinc ion binding"/>
    <property type="evidence" value="ECO:0007669"/>
    <property type="project" value="UniProtKB-KW"/>
</dbReference>
<dbReference type="GO" id="GO:0006351">
    <property type="term" value="P:DNA-templated transcription"/>
    <property type="evidence" value="ECO:0007669"/>
    <property type="project" value="UniProtKB-UniRule"/>
</dbReference>
<dbReference type="GO" id="GO:0039645">
    <property type="term" value="P:symbiont-mediated perturbation of host cell cycle G1/S transition checkpoint"/>
    <property type="evidence" value="ECO:0007669"/>
    <property type="project" value="UniProtKB-UniRule"/>
</dbReference>
<dbReference type="GO" id="GO:0052170">
    <property type="term" value="P:symbiont-mediated suppression of host innate immune response"/>
    <property type="evidence" value="ECO:0007669"/>
    <property type="project" value="UniProtKB-KW"/>
</dbReference>
<dbReference type="GO" id="GO:0039502">
    <property type="term" value="P:symbiont-mediated suppression of host type I interferon-mediated signaling pathway"/>
    <property type="evidence" value="ECO:0007669"/>
    <property type="project" value="UniProtKB-UniRule"/>
</dbReference>
<dbReference type="Gene3D" id="3.30.160.330">
    <property type="match status" value="1"/>
</dbReference>
<dbReference type="HAMAP" id="MF_04004">
    <property type="entry name" value="PPV_E7"/>
    <property type="match status" value="1"/>
</dbReference>
<dbReference type="InterPro" id="IPR000148">
    <property type="entry name" value="Papilloma_E7"/>
</dbReference>
<dbReference type="Pfam" id="PF00527">
    <property type="entry name" value="E7"/>
    <property type="match status" value="1"/>
</dbReference>
<dbReference type="PIRSF" id="PIRSF003407">
    <property type="entry name" value="Papvi_E7"/>
    <property type="match status" value="1"/>
</dbReference>
<dbReference type="SUPFAM" id="SSF161234">
    <property type="entry name" value="E7 C-terminal domain-like"/>
    <property type="match status" value="1"/>
</dbReference>
<reference key="1">
    <citation type="submission" date="1995-10" db="EMBL/GenBank/DDBJ databases">
        <authorList>
            <person name="Delius H."/>
        </authorList>
    </citation>
    <scope>NUCLEOTIDE SEQUENCE [GENOMIC DNA]</scope>
</reference>
<reference key="2">
    <citation type="journal article" date="2002" name="Rev. Med. Virol.">
        <title>Interactions of SV40 large T antigen and other viral proteins with retinoblastoma tumour suppressor.</title>
        <authorList>
            <person name="Lee C."/>
            <person name="Cho Y."/>
        </authorList>
    </citation>
    <scope>REVIEW</scope>
</reference>
<organismHost>
    <name type="scientific">Homo sapiens</name>
    <name type="common">Human</name>
    <dbReference type="NCBI Taxonomy" id="9606"/>
</organismHost>
<protein>
    <recommendedName>
        <fullName evidence="1">Protein E7</fullName>
    </recommendedName>
</protein>
<keyword id="KW-0010">Activator</keyword>
<keyword id="KW-0238">DNA-binding</keyword>
<keyword id="KW-0244">Early protein</keyword>
<keyword id="KW-1078">G1/S host cell cycle checkpoint dysregulation by virus</keyword>
<keyword id="KW-1035">Host cytoplasm</keyword>
<keyword id="KW-1048">Host nucleus</keyword>
<keyword id="KW-0945">Host-virus interaction</keyword>
<keyword id="KW-1090">Inhibition of host innate immune response by virus</keyword>
<keyword id="KW-1114">Inhibition of host interferon signaling pathway by virus</keyword>
<keyword id="KW-0922">Interferon antiviral system evasion</keyword>
<keyword id="KW-0479">Metal-binding</keyword>
<keyword id="KW-1121">Modulation of host cell cycle by virus</keyword>
<keyword id="KW-0553">Oncogene</keyword>
<keyword id="KW-1185">Reference proteome</keyword>
<keyword id="KW-0804">Transcription</keyword>
<keyword id="KW-0805">Transcription regulation</keyword>
<keyword id="KW-0899">Viral immunoevasion</keyword>
<keyword id="KW-0862">Zinc</keyword>
<keyword id="KW-0863">Zinc-finger</keyword>
<organism>
    <name type="scientific">Human papillomavirus 29</name>
    <dbReference type="NCBI Taxonomy" id="37112"/>
    <lineage>
        <taxon>Viruses</taxon>
        <taxon>Monodnaviria</taxon>
        <taxon>Shotokuvirae</taxon>
        <taxon>Cossaviricota</taxon>
        <taxon>Papovaviricetes</taxon>
        <taxon>Zurhausenvirales</taxon>
        <taxon>Papillomaviridae</taxon>
        <taxon>Firstpapillomavirinae</taxon>
        <taxon>Alphapapillomavirus</taxon>
        <taxon>Alphapapillomavirus 2</taxon>
    </lineage>
</organism>
<name>VE7_HPV29</name>
<gene>
    <name evidence="1" type="primary">E7</name>
</gene>
<accession>P50784</accession>
<feature type="chain" id="PRO_0000133427" description="Protein E7">
    <location>
        <begin position="1"/>
        <end position="90"/>
    </location>
</feature>
<feature type="zinc finger region" evidence="1">
    <location>
        <begin position="53"/>
        <end position="89"/>
    </location>
</feature>
<feature type="region of interest" description="E7 terminal domain" evidence="1">
    <location>
        <begin position="1"/>
        <end position="41"/>
    </location>
</feature>
<feature type="short sequence motif" description="LXCXE motif; interaction with host RB1 and TMEM173/STING" evidence="1">
    <location>
        <begin position="22"/>
        <end position="26"/>
    </location>
</feature>
<feature type="short sequence motif" description="Nuclear export signal" evidence="1">
    <location>
        <begin position="71"/>
        <end position="79"/>
    </location>
</feature>
<sequence>MHGPKPTVKDIELDLAPEAVPLVCNEQLDSSDEEDCIDVVEPAQQAYRVVTLCTKCSTTLRLVVESSEADIRAFQELLLRTLKIVCPRCA</sequence>
<proteinExistence type="inferred from homology"/>